<proteinExistence type="evidence at transcript level"/>
<reference key="1">
    <citation type="journal article" date="1993" name="Biochim. Biophys. Acta">
        <title>Conservation in sequence and affinity of human and rodent PDGF ligands and receptors.</title>
        <authorList>
            <person name="Herren B."/>
            <person name="Weyer K.A."/>
            <person name="Rouge M."/>
            <person name="Loetscher P."/>
            <person name="Pech M."/>
        </authorList>
    </citation>
    <scope>NUCLEOTIDE SEQUENCE [MRNA]</scope>
</reference>
<reference key="2">
    <citation type="journal article" date="1995" name="Circ. Res.">
        <title>A subpopulation of smooth muscle cells in injured rat arteries expresses platelet-derived growth factor-B chain mRNA.</title>
        <authorList>
            <person name="Lindner V."/>
            <person name="Giachelli C.M."/>
            <person name="Schwartz S.M."/>
            <person name="Reidy M.A."/>
        </authorList>
    </citation>
    <scope>NUCLEOTIDE SEQUENCE [MRNA] OF 74-182</scope>
    <source>
        <strain>Sprague-Dawley</strain>
        <tissue>Smooth muscle</tissue>
    </source>
</reference>
<sequence>LPLCCYLRLVSAEGDPIPEELYEMLSDHSIRSFDDLQRLLHRDSVDEDGAELDLNMTRAHSGVESESSSRGRRSLGSLAAAEPAVIAECKTRTEVFQISRNLIDRTNANFLVWPPCVEVQRCSGCCNNRNVQCRASQVQMRPVQVRKIEIVRKKPVFKKATVTLEDHLACKCETVVTPRPVTRSPGTSREHRAKTPQTRVTVRTVRIRRPPKGKHRKFKHTHDKK</sequence>
<evidence type="ECO:0000250" key="1"/>
<evidence type="ECO:0000250" key="2">
    <source>
        <dbReference type="UniProtKB" id="P01127"/>
    </source>
</evidence>
<evidence type="ECO:0000250" key="3">
    <source>
        <dbReference type="UniProtKB" id="P31240"/>
    </source>
</evidence>
<evidence type="ECO:0000255" key="4"/>
<evidence type="ECO:0000305" key="5"/>
<gene>
    <name type="primary">Pdgfb</name>
</gene>
<name>PDGFB_RAT</name>
<dbReference type="EMBL" id="Z14117">
    <property type="protein sequence ID" value="CAA78487.1"/>
    <property type="molecule type" value="mRNA"/>
</dbReference>
<dbReference type="EMBL" id="L40991">
    <property type="protein sequence ID" value="AAA70048.1"/>
    <property type="molecule type" value="mRNA"/>
</dbReference>
<dbReference type="PIR" id="S25097">
    <property type="entry name" value="S25097"/>
</dbReference>
<dbReference type="RefSeq" id="NP_113712.1">
    <property type="nucleotide sequence ID" value="NM_031524.1"/>
</dbReference>
<dbReference type="SMR" id="Q05028"/>
<dbReference type="ComplexPortal" id="CPX-6591">
    <property type="entry name" value="Platelet-derived growth factor AB complex"/>
</dbReference>
<dbReference type="FunCoup" id="Q05028">
    <property type="interactions" value="564"/>
</dbReference>
<dbReference type="STRING" id="10116.ENSRNOP00000023196"/>
<dbReference type="GlyCosmos" id="Q05028">
    <property type="glycosylation" value="1 site, No reported glycans"/>
</dbReference>
<dbReference type="GlyGen" id="Q05028">
    <property type="glycosylation" value="1 site"/>
</dbReference>
<dbReference type="PhosphoSitePlus" id="Q05028"/>
<dbReference type="PaxDb" id="10116-ENSRNOP00000023196"/>
<dbReference type="GeneID" id="24628"/>
<dbReference type="KEGG" id="rno:24628"/>
<dbReference type="UCSC" id="RGD:3283">
    <property type="organism name" value="rat"/>
</dbReference>
<dbReference type="AGR" id="RGD:3283"/>
<dbReference type="CTD" id="5155"/>
<dbReference type="RGD" id="3283">
    <property type="gene designation" value="Pdgfb"/>
</dbReference>
<dbReference type="eggNOG" id="ENOG502S2VW">
    <property type="taxonomic scope" value="Eukaryota"/>
</dbReference>
<dbReference type="InParanoid" id="Q05028"/>
<dbReference type="OrthoDB" id="49001at9989"/>
<dbReference type="PhylomeDB" id="Q05028"/>
<dbReference type="Reactome" id="R-RNO-114608">
    <property type="pathway name" value="Platelet degranulation"/>
</dbReference>
<dbReference type="Reactome" id="R-RNO-1257604">
    <property type="pathway name" value="PIP3 activates AKT signaling"/>
</dbReference>
<dbReference type="Reactome" id="R-RNO-186763">
    <property type="pathway name" value="Downstream signal transduction"/>
</dbReference>
<dbReference type="Reactome" id="R-RNO-186797">
    <property type="pathway name" value="Signaling by PDGF"/>
</dbReference>
<dbReference type="Reactome" id="R-RNO-5673001">
    <property type="pathway name" value="RAF/MAP kinase cascade"/>
</dbReference>
<dbReference type="Reactome" id="R-RNO-6811558">
    <property type="pathway name" value="PI5P, PP2A and IER3 Regulate PI3K/AKT Signaling"/>
</dbReference>
<dbReference type="Proteomes" id="UP000002494">
    <property type="component" value="Unplaced"/>
</dbReference>
<dbReference type="GO" id="GO:0016323">
    <property type="term" value="C:basolateral plasma membrane"/>
    <property type="evidence" value="ECO:0000314"/>
    <property type="project" value="UniProtKB"/>
</dbReference>
<dbReference type="GO" id="GO:0009986">
    <property type="term" value="C:cell surface"/>
    <property type="evidence" value="ECO:0000250"/>
    <property type="project" value="UniProtKB"/>
</dbReference>
<dbReference type="GO" id="GO:0005737">
    <property type="term" value="C:cytoplasm"/>
    <property type="evidence" value="ECO:0000314"/>
    <property type="project" value="UniProtKB"/>
</dbReference>
<dbReference type="GO" id="GO:0030425">
    <property type="term" value="C:dendrite"/>
    <property type="evidence" value="ECO:0000314"/>
    <property type="project" value="RGD"/>
</dbReference>
<dbReference type="GO" id="GO:0005615">
    <property type="term" value="C:extracellular space"/>
    <property type="evidence" value="ECO:0000314"/>
    <property type="project" value="RGD"/>
</dbReference>
<dbReference type="GO" id="GO:0043025">
    <property type="term" value="C:neuronal cell body"/>
    <property type="evidence" value="ECO:0000314"/>
    <property type="project" value="RGD"/>
</dbReference>
<dbReference type="GO" id="GO:1990265">
    <property type="term" value="C:platelet-derived growth factor complex"/>
    <property type="evidence" value="ECO:0000266"/>
    <property type="project" value="RGD"/>
</dbReference>
<dbReference type="GO" id="GO:0042056">
    <property type="term" value="F:chemoattractant activity"/>
    <property type="evidence" value="ECO:0000266"/>
    <property type="project" value="RGD"/>
</dbReference>
<dbReference type="GO" id="GO:0005518">
    <property type="term" value="F:collagen binding"/>
    <property type="evidence" value="ECO:0000266"/>
    <property type="project" value="RGD"/>
</dbReference>
<dbReference type="GO" id="GO:0008083">
    <property type="term" value="F:growth factor activity"/>
    <property type="evidence" value="ECO:0000250"/>
    <property type="project" value="UniProtKB"/>
</dbReference>
<dbReference type="GO" id="GO:0042802">
    <property type="term" value="F:identical protein binding"/>
    <property type="evidence" value="ECO:0000266"/>
    <property type="project" value="RGD"/>
</dbReference>
<dbReference type="GO" id="GO:0048407">
    <property type="term" value="F:platelet-derived growth factor binding"/>
    <property type="evidence" value="ECO:0000266"/>
    <property type="project" value="RGD"/>
</dbReference>
<dbReference type="GO" id="GO:0005161">
    <property type="term" value="F:platelet-derived growth factor receptor binding"/>
    <property type="evidence" value="ECO:0000266"/>
    <property type="project" value="RGD"/>
</dbReference>
<dbReference type="GO" id="GO:0046982">
    <property type="term" value="F:protein heterodimerization activity"/>
    <property type="evidence" value="ECO:0000266"/>
    <property type="project" value="RGD"/>
</dbReference>
<dbReference type="GO" id="GO:0042803">
    <property type="term" value="F:protein homodimerization activity"/>
    <property type="evidence" value="ECO:0000250"/>
    <property type="project" value="UniProtKB"/>
</dbReference>
<dbReference type="GO" id="GO:0005102">
    <property type="term" value="F:signaling receptor binding"/>
    <property type="evidence" value="ECO:0000315"/>
    <property type="project" value="UniProtKB"/>
</dbReference>
<dbReference type="GO" id="GO:0016176">
    <property type="term" value="F:superoxide-generating NADPH oxidase activator activity"/>
    <property type="evidence" value="ECO:0000250"/>
    <property type="project" value="UniProtKB"/>
</dbReference>
<dbReference type="GO" id="GO:0030036">
    <property type="term" value="P:actin cytoskeleton organization"/>
    <property type="evidence" value="ECO:0000266"/>
    <property type="project" value="RGD"/>
</dbReference>
<dbReference type="GO" id="GO:0001525">
    <property type="term" value="P:angiogenesis"/>
    <property type="evidence" value="ECO:0000318"/>
    <property type="project" value="GO_Central"/>
</dbReference>
<dbReference type="GO" id="GO:0001568">
    <property type="term" value="P:blood vessel development"/>
    <property type="evidence" value="ECO:0000266"/>
    <property type="project" value="RGD"/>
</dbReference>
<dbReference type="GO" id="GO:0048514">
    <property type="term" value="P:blood vessel morphogenesis"/>
    <property type="evidence" value="ECO:0000266"/>
    <property type="project" value="RGD"/>
</dbReference>
<dbReference type="GO" id="GO:0060445">
    <property type="term" value="P:branching involved in salivary gland morphogenesis"/>
    <property type="evidence" value="ECO:0000266"/>
    <property type="project" value="RGD"/>
</dbReference>
<dbReference type="GO" id="GO:0060326">
    <property type="term" value="P:cell chemotaxis"/>
    <property type="evidence" value="ECO:0000250"/>
    <property type="project" value="UniProtKB"/>
</dbReference>
<dbReference type="GO" id="GO:0016477">
    <property type="term" value="P:cell migration"/>
    <property type="evidence" value="ECO:0000266"/>
    <property type="project" value="RGD"/>
</dbReference>
<dbReference type="GO" id="GO:0030031">
    <property type="term" value="P:cell projection assembly"/>
    <property type="evidence" value="ECO:0000266"/>
    <property type="project" value="RGD"/>
</dbReference>
<dbReference type="GO" id="GO:1904385">
    <property type="term" value="P:cellular response to angiotensin"/>
    <property type="evidence" value="ECO:0000270"/>
    <property type="project" value="RGD"/>
</dbReference>
<dbReference type="GO" id="GO:0071363">
    <property type="term" value="P:cellular response to growth factor stimulus"/>
    <property type="evidence" value="ECO:0000266"/>
    <property type="project" value="RGD"/>
</dbReference>
<dbReference type="GO" id="GO:0071260">
    <property type="term" value="P:cellular response to mechanical stimulus"/>
    <property type="evidence" value="ECO:0000270"/>
    <property type="project" value="RGD"/>
</dbReference>
<dbReference type="GO" id="GO:0071506">
    <property type="term" value="P:cellular response to mycophenolic acid"/>
    <property type="evidence" value="ECO:0000314"/>
    <property type="project" value="UniProtKB"/>
</dbReference>
<dbReference type="GO" id="GO:0036120">
    <property type="term" value="P:cellular response to platelet-derived growth factor stimulus"/>
    <property type="evidence" value="ECO:0000250"/>
    <property type="project" value="ARUK-UCL"/>
</dbReference>
<dbReference type="GO" id="GO:0001892">
    <property type="term" value="P:embryonic placenta development"/>
    <property type="evidence" value="ECO:0000250"/>
    <property type="project" value="UniProtKB"/>
</dbReference>
<dbReference type="GO" id="GO:0001935">
    <property type="term" value="P:endothelial cell proliferation"/>
    <property type="evidence" value="ECO:0000266"/>
    <property type="project" value="RGD"/>
</dbReference>
<dbReference type="GO" id="GO:0060664">
    <property type="term" value="P:epithelial cell proliferation involved in salivary gland morphogenesis"/>
    <property type="evidence" value="ECO:0000266"/>
    <property type="project" value="RGD"/>
</dbReference>
<dbReference type="GO" id="GO:0042462">
    <property type="term" value="P:eye photoreceptor cell development"/>
    <property type="evidence" value="ECO:0000266"/>
    <property type="project" value="RGD"/>
</dbReference>
<dbReference type="GO" id="GO:0008543">
    <property type="term" value="P:fibroblast growth factor receptor signaling pathway"/>
    <property type="evidence" value="ECO:0000266"/>
    <property type="project" value="RGD"/>
</dbReference>
<dbReference type="GO" id="GO:0010761">
    <property type="term" value="P:fibroblast migration"/>
    <property type="evidence" value="ECO:0000266"/>
    <property type="project" value="RGD"/>
</dbReference>
<dbReference type="GO" id="GO:0010467">
    <property type="term" value="P:gene expression"/>
    <property type="evidence" value="ECO:0000266"/>
    <property type="project" value="RGD"/>
</dbReference>
<dbReference type="GO" id="GO:0021782">
    <property type="term" value="P:glial cell development"/>
    <property type="evidence" value="ECO:0000266"/>
    <property type="project" value="RGD"/>
</dbReference>
<dbReference type="GO" id="GO:0007507">
    <property type="term" value="P:heart development"/>
    <property type="evidence" value="ECO:0000250"/>
    <property type="project" value="UniProtKB"/>
</dbReference>
<dbReference type="GO" id="GO:0035655">
    <property type="term" value="P:interleukin-18-mediated signaling pathway"/>
    <property type="evidence" value="ECO:0000266"/>
    <property type="project" value="RGD"/>
</dbReference>
<dbReference type="GO" id="GO:0035556">
    <property type="term" value="P:intracellular signal transduction"/>
    <property type="evidence" value="ECO:0000266"/>
    <property type="project" value="RGD"/>
</dbReference>
<dbReference type="GO" id="GO:0008584">
    <property type="term" value="P:male gonad development"/>
    <property type="evidence" value="ECO:0000270"/>
    <property type="project" value="RGD"/>
</dbReference>
<dbReference type="GO" id="GO:0072264">
    <property type="term" value="P:metanephric glomerular endothelium development"/>
    <property type="evidence" value="ECO:0000266"/>
    <property type="project" value="RGD"/>
</dbReference>
<dbReference type="GO" id="GO:0072255">
    <property type="term" value="P:metanephric glomerular mesangial cell development"/>
    <property type="evidence" value="ECO:0000250"/>
    <property type="project" value="UniProtKB"/>
</dbReference>
<dbReference type="GO" id="GO:0072262">
    <property type="term" value="P:metanephric glomerular mesangial cell proliferation involved in metanephros development"/>
    <property type="evidence" value="ECO:0000266"/>
    <property type="project" value="RGD"/>
</dbReference>
<dbReference type="GO" id="GO:0002548">
    <property type="term" value="P:monocyte chemotaxis"/>
    <property type="evidence" value="ECO:0000250"/>
    <property type="project" value="UniProtKB"/>
</dbReference>
<dbReference type="GO" id="GO:0051450">
    <property type="term" value="P:myoblast proliferation"/>
    <property type="evidence" value="ECO:0000270"/>
    <property type="project" value="RGD"/>
</dbReference>
<dbReference type="GO" id="GO:0045892">
    <property type="term" value="P:negative regulation of DNA-templated transcription"/>
    <property type="evidence" value="ECO:0000266"/>
    <property type="project" value="RGD"/>
</dbReference>
<dbReference type="GO" id="GO:0010629">
    <property type="term" value="P:negative regulation of gene expression"/>
    <property type="evidence" value="ECO:0000250"/>
    <property type="project" value="UniProtKB"/>
</dbReference>
<dbReference type="GO" id="GO:1902894">
    <property type="term" value="P:negative regulation of miRNA transcription"/>
    <property type="evidence" value="ECO:0000266"/>
    <property type="project" value="RGD"/>
</dbReference>
<dbReference type="GO" id="GO:0010512">
    <property type="term" value="P:negative regulation of phosphatidylinositol biosynthetic process"/>
    <property type="evidence" value="ECO:0000250"/>
    <property type="project" value="UniProtKB"/>
</dbReference>
<dbReference type="GO" id="GO:0010544">
    <property type="term" value="P:negative regulation of platelet activation"/>
    <property type="evidence" value="ECO:0000250"/>
    <property type="project" value="UniProtKB"/>
</dbReference>
<dbReference type="GO" id="GO:1905064">
    <property type="term" value="P:negative regulation of vascular associated smooth muscle cell differentiation"/>
    <property type="evidence" value="ECO:0000266"/>
    <property type="project" value="RGD"/>
</dbReference>
<dbReference type="GO" id="GO:1904753">
    <property type="term" value="P:negative regulation of vascular associated smooth muscle cell migration"/>
    <property type="evidence" value="ECO:0000266"/>
    <property type="project" value="RGD"/>
</dbReference>
<dbReference type="GO" id="GO:0016322">
    <property type="term" value="P:neuron remodeling"/>
    <property type="evidence" value="ECO:0000266"/>
    <property type="project" value="RGD"/>
</dbReference>
<dbReference type="GO" id="GO:0038001">
    <property type="term" value="P:paracrine signaling"/>
    <property type="evidence" value="ECO:0000250"/>
    <property type="project" value="UniProtKB"/>
</dbReference>
<dbReference type="GO" id="GO:0018108">
    <property type="term" value="P:peptidyl-tyrosine phosphorylation"/>
    <property type="evidence" value="ECO:0000250"/>
    <property type="project" value="UniProtKB"/>
</dbReference>
<dbReference type="GO" id="GO:0043491">
    <property type="term" value="P:phosphatidylinositol 3-kinase/protein kinase B signal transduction"/>
    <property type="evidence" value="ECO:0000266"/>
    <property type="project" value="RGD"/>
</dbReference>
<dbReference type="GO" id="GO:0048008">
    <property type="term" value="P:platelet-derived growth factor receptor signaling pathway"/>
    <property type="evidence" value="ECO:0000315"/>
    <property type="project" value="RGD"/>
</dbReference>
<dbReference type="GO" id="GO:0043536">
    <property type="term" value="P:positive regulation of blood vessel endothelial cell migration"/>
    <property type="evidence" value="ECO:0000250"/>
    <property type="project" value="UniProtKB"/>
</dbReference>
<dbReference type="GO" id="GO:0090280">
    <property type="term" value="P:positive regulation of calcium ion import"/>
    <property type="evidence" value="ECO:0000250"/>
    <property type="project" value="UniProtKB"/>
</dbReference>
<dbReference type="GO" id="GO:0051781">
    <property type="term" value="P:positive regulation of cell division"/>
    <property type="evidence" value="ECO:0007669"/>
    <property type="project" value="UniProtKB-KW"/>
</dbReference>
<dbReference type="GO" id="GO:0030335">
    <property type="term" value="P:positive regulation of cell migration"/>
    <property type="evidence" value="ECO:0000266"/>
    <property type="project" value="RGD"/>
</dbReference>
<dbReference type="GO" id="GO:0008284">
    <property type="term" value="P:positive regulation of cell population proliferation"/>
    <property type="evidence" value="ECO:0000250"/>
    <property type="project" value="UniProtKB"/>
</dbReference>
<dbReference type="GO" id="GO:0010811">
    <property type="term" value="P:positive regulation of cell-substrate adhesion"/>
    <property type="evidence" value="ECO:0000266"/>
    <property type="project" value="RGD"/>
</dbReference>
<dbReference type="GO" id="GO:0050921">
    <property type="term" value="P:positive regulation of chemotaxis"/>
    <property type="evidence" value="ECO:0000250"/>
    <property type="project" value="UniProtKB"/>
</dbReference>
<dbReference type="GO" id="GO:0032967">
    <property type="term" value="P:positive regulation of collagen biosynthetic process"/>
    <property type="evidence" value="ECO:0000315"/>
    <property type="project" value="RGD"/>
</dbReference>
<dbReference type="GO" id="GO:2000573">
    <property type="term" value="P:positive regulation of DNA biosynthetic process"/>
    <property type="evidence" value="ECO:0000250"/>
    <property type="project" value="UniProtKB"/>
</dbReference>
<dbReference type="GO" id="GO:0045740">
    <property type="term" value="P:positive regulation of DNA replication"/>
    <property type="evidence" value="ECO:0000315"/>
    <property type="project" value="RGD"/>
</dbReference>
<dbReference type="GO" id="GO:0045893">
    <property type="term" value="P:positive regulation of DNA-templated transcription"/>
    <property type="evidence" value="ECO:0000314"/>
    <property type="project" value="UniProtKB"/>
</dbReference>
<dbReference type="GO" id="GO:0001938">
    <property type="term" value="P:positive regulation of endothelial cell proliferation"/>
    <property type="evidence" value="ECO:0000250"/>
    <property type="project" value="UniProtKB"/>
</dbReference>
<dbReference type="GO" id="GO:0070374">
    <property type="term" value="P:positive regulation of ERK1 and ERK2 cascade"/>
    <property type="evidence" value="ECO:0000250"/>
    <property type="project" value="UniProtKB"/>
</dbReference>
<dbReference type="GO" id="GO:0045743">
    <property type="term" value="P:positive regulation of fibroblast growth factor receptor signaling pathway"/>
    <property type="evidence" value="ECO:0000266"/>
    <property type="project" value="RGD"/>
</dbReference>
<dbReference type="GO" id="GO:0010763">
    <property type="term" value="P:positive regulation of fibroblast migration"/>
    <property type="evidence" value="ECO:0000266"/>
    <property type="project" value="RGD"/>
</dbReference>
<dbReference type="GO" id="GO:0048146">
    <property type="term" value="P:positive regulation of fibroblast proliferation"/>
    <property type="evidence" value="ECO:0000250"/>
    <property type="project" value="UniProtKB"/>
</dbReference>
<dbReference type="GO" id="GO:0010628">
    <property type="term" value="P:positive regulation of gene expression"/>
    <property type="evidence" value="ECO:0000250"/>
    <property type="project" value="BHF-UCL"/>
</dbReference>
<dbReference type="GO" id="GO:0003104">
    <property type="term" value="P:positive regulation of glomerular filtration"/>
    <property type="evidence" value="ECO:0000250"/>
    <property type="project" value="UniProtKB"/>
</dbReference>
<dbReference type="GO" id="GO:0072126">
    <property type="term" value="P:positive regulation of glomerular mesangial cell proliferation"/>
    <property type="evidence" value="ECO:0000250"/>
    <property type="project" value="UniProtKB"/>
</dbReference>
<dbReference type="GO" id="GO:2000491">
    <property type="term" value="P:positive regulation of hepatic stellate cell activation"/>
    <property type="evidence" value="ECO:0000315"/>
    <property type="project" value="RGD"/>
</dbReference>
<dbReference type="GO" id="GO:1904899">
    <property type="term" value="P:positive regulation of hepatic stellate cell proliferation"/>
    <property type="evidence" value="ECO:0000315"/>
    <property type="project" value="RGD"/>
</dbReference>
<dbReference type="GO" id="GO:1900127">
    <property type="term" value="P:positive regulation of hyaluronan biosynthetic process"/>
    <property type="evidence" value="ECO:0000250"/>
    <property type="project" value="UniProtKB"/>
</dbReference>
<dbReference type="GO" id="GO:0043406">
    <property type="term" value="P:positive regulation of MAP kinase activity"/>
    <property type="evidence" value="ECO:0000314"/>
    <property type="project" value="UniProtKB"/>
</dbReference>
<dbReference type="GO" id="GO:0043410">
    <property type="term" value="P:positive regulation of MAPK cascade"/>
    <property type="evidence" value="ECO:0000250"/>
    <property type="project" value="UniProtKB"/>
</dbReference>
<dbReference type="GO" id="GO:2000591">
    <property type="term" value="P:positive regulation of metanephric mesenchymal cell migration"/>
    <property type="evidence" value="ECO:0000314"/>
    <property type="project" value="UniProtKB"/>
</dbReference>
<dbReference type="GO" id="GO:0035793">
    <property type="term" value="P:positive regulation of metanephric mesenchymal cell migration by platelet-derived growth factor receptor-beta signaling pathway"/>
    <property type="evidence" value="ECO:0000250"/>
    <property type="project" value="UniProtKB"/>
</dbReference>
<dbReference type="GO" id="GO:1902895">
    <property type="term" value="P:positive regulation of miRNA transcription"/>
    <property type="evidence" value="ECO:0000266"/>
    <property type="project" value="RGD"/>
</dbReference>
<dbReference type="GO" id="GO:0045977">
    <property type="term" value="P:positive regulation of mitotic cell cycle, embryonic"/>
    <property type="evidence" value="ECO:0000266"/>
    <property type="project" value="RGD"/>
</dbReference>
<dbReference type="GO" id="GO:0045840">
    <property type="term" value="P:positive regulation of mitotic nuclear division"/>
    <property type="evidence" value="ECO:0000250"/>
    <property type="project" value="UniProtKB"/>
</dbReference>
<dbReference type="GO" id="GO:0051897">
    <property type="term" value="P:positive regulation of phosphatidylinositol 3-kinase/protein kinase B signal transduction"/>
    <property type="evidence" value="ECO:0000250"/>
    <property type="project" value="UniProtKB"/>
</dbReference>
<dbReference type="GO" id="GO:0031954">
    <property type="term" value="P:positive regulation of protein autophosphorylation"/>
    <property type="evidence" value="ECO:0000250"/>
    <property type="project" value="UniProtKB"/>
</dbReference>
<dbReference type="GO" id="GO:2000379">
    <property type="term" value="P:positive regulation of reactive oxygen species metabolic process"/>
    <property type="evidence" value="ECO:0000250"/>
    <property type="project" value="UniProtKB"/>
</dbReference>
<dbReference type="GO" id="GO:0014911">
    <property type="term" value="P:positive regulation of smooth muscle cell migration"/>
    <property type="evidence" value="ECO:0000315"/>
    <property type="project" value="RGD"/>
</dbReference>
<dbReference type="GO" id="GO:0048661">
    <property type="term" value="P:positive regulation of smooth muscle cell proliferation"/>
    <property type="evidence" value="ECO:0000315"/>
    <property type="project" value="RGD"/>
</dbReference>
<dbReference type="GO" id="GO:1905176">
    <property type="term" value="P:positive regulation of vascular associated smooth muscle cell dedifferentiation"/>
    <property type="evidence" value="ECO:0000266"/>
    <property type="project" value="RGD"/>
</dbReference>
<dbReference type="GO" id="GO:1904754">
    <property type="term" value="P:positive regulation of vascular associated smooth muscle cell migration"/>
    <property type="evidence" value="ECO:0000266"/>
    <property type="project" value="RGD"/>
</dbReference>
<dbReference type="GO" id="GO:1904707">
    <property type="term" value="P:positive regulation of vascular associated smooth muscle cell proliferation"/>
    <property type="evidence" value="ECO:0000266"/>
    <property type="project" value="RGD"/>
</dbReference>
<dbReference type="GO" id="GO:0006468">
    <property type="term" value="P:protein phosphorylation"/>
    <property type="evidence" value="ECO:0000250"/>
    <property type="project" value="UniProtKB"/>
</dbReference>
<dbReference type="GO" id="GO:0072593">
    <property type="term" value="P:reactive oxygen species metabolic process"/>
    <property type="evidence" value="ECO:0000250"/>
    <property type="project" value="UniProtKB"/>
</dbReference>
<dbReference type="GO" id="GO:0042127">
    <property type="term" value="P:regulation of cell population proliferation"/>
    <property type="evidence" value="ECO:0000270"/>
    <property type="project" value="RGD"/>
</dbReference>
<dbReference type="GO" id="GO:0048678">
    <property type="term" value="P:response to axon injury"/>
    <property type="evidence" value="ECO:0000270"/>
    <property type="project" value="RGD"/>
</dbReference>
<dbReference type="GO" id="GO:0032355">
    <property type="term" value="P:response to estradiol"/>
    <property type="evidence" value="ECO:0000270"/>
    <property type="project" value="RGD"/>
</dbReference>
<dbReference type="GO" id="GO:0043627">
    <property type="term" value="P:response to estrogen"/>
    <property type="evidence" value="ECO:0000270"/>
    <property type="project" value="RGD"/>
</dbReference>
<dbReference type="GO" id="GO:0044752">
    <property type="term" value="P:response to human chorionic gonadotropin"/>
    <property type="evidence" value="ECO:0000270"/>
    <property type="project" value="RGD"/>
</dbReference>
<dbReference type="GO" id="GO:0001666">
    <property type="term" value="P:response to hypoxia"/>
    <property type="evidence" value="ECO:0000270"/>
    <property type="project" value="RGD"/>
</dbReference>
<dbReference type="GO" id="GO:0032868">
    <property type="term" value="P:response to insulin"/>
    <property type="evidence" value="ECO:0000270"/>
    <property type="project" value="RGD"/>
</dbReference>
<dbReference type="GO" id="GO:1905235">
    <property type="term" value="P:response to quercetin"/>
    <property type="evidence" value="ECO:0000270"/>
    <property type="project" value="RGD"/>
</dbReference>
<dbReference type="GO" id="GO:0009611">
    <property type="term" value="P:response to wounding"/>
    <property type="evidence" value="ECO:0000250"/>
    <property type="project" value="UniProtKB"/>
</dbReference>
<dbReference type="GO" id="GO:0009410">
    <property type="term" value="P:response to xenobiotic stimulus"/>
    <property type="evidence" value="ECO:0000270"/>
    <property type="project" value="RGD"/>
</dbReference>
<dbReference type="GO" id="GO:0060041">
    <property type="term" value="P:retina development in camera-type eye"/>
    <property type="evidence" value="ECO:0000266"/>
    <property type="project" value="RGD"/>
</dbReference>
<dbReference type="GO" id="GO:0061298">
    <property type="term" value="P:retina vasculature development in camera-type eye"/>
    <property type="evidence" value="ECO:0000266"/>
    <property type="project" value="RGD"/>
</dbReference>
<dbReference type="GO" id="GO:0006929">
    <property type="term" value="P:substrate-dependent cell migration"/>
    <property type="evidence" value="ECO:0000266"/>
    <property type="project" value="RGD"/>
</dbReference>
<dbReference type="GO" id="GO:0007416">
    <property type="term" value="P:synapse assembly"/>
    <property type="evidence" value="ECO:0000266"/>
    <property type="project" value="RGD"/>
</dbReference>
<dbReference type="GO" id="GO:1904738">
    <property type="term" value="P:vascular associated smooth muscle cell migration"/>
    <property type="evidence" value="ECO:0000266"/>
    <property type="project" value="RGD"/>
</dbReference>
<dbReference type="GO" id="GO:1990874">
    <property type="term" value="P:vascular associated smooth muscle cell proliferation"/>
    <property type="evidence" value="ECO:0000266"/>
    <property type="project" value="RGD"/>
</dbReference>
<dbReference type="CDD" id="cd00135">
    <property type="entry name" value="PDGF"/>
    <property type="match status" value="1"/>
</dbReference>
<dbReference type="FunFam" id="2.10.90.10:FF:000023">
    <property type="entry name" value="Platelet-derived growth factor subunit B"/>
    <property type="match status" value="1"/>
</dbReference>
<dbReference type="Gene3D" id="2.10.90.10">
    <property type="entry name" value="Cystine-knot cytokines"/>
    <property type="match status" value="1"/>
</dbReference>
<dbReference type="InterPro" id="IPR029034">
    <property type="entry name" value="Cystine-knot_cytokine"/>
</dbReference>
<dbReference type="InterPro" id="IPR023581">
    <property type="entry name" value="PD_growth_factor_CS"/>
</dbReference>
<dbReference type="InterPro" id="IPR000072">
    <property type="entry name" value="PDGF/VEGF_dom"/>
</dbReference>
<dbReference type="InterPro" id="IPR006782">
    <property type="entry name" value="PDGF_N"/>
</dbReference>
<dbReference type="PANTHER" id="PTHR11633">
    <property type="entry name" value="PLATELET-DERIVED GROWTH FACTOR"/>
    <property type="match status" value="1"/>
</dbReference>
<dbReference type="PANTHER" id="PTHR11633:SF2">
    <property type="entry name" value="PLATELET-DERIVED GROWTH FACTOR SUBUNIT B"/>
    <property type="match status" value="1"/>
</dbReference>
<dbReference type="Pfam" id="PF00341">
    <property type="entry name" value="PDGF"/>
    <property type="match status" value="1"/>
</dbReference>
<dbReference type="Pfam" id="PF04692">
    <property type="entry name" value="PDGF_N"/>
    <property type="match status" value="1"/>
</dbReference>
<dbReference type="SMART" id="SM00141">
    <property type="entry name" value="PDGF"/>
    <property type="match status" value="1"/>
</dbReference>
<dbReference type="SUPFAM" id="SSF57501">
    <property type="entry name" value="Cystine-knot cytokines"/>
    <property type="match status" value="1"/>
</dbReference>
<dbReference type="PROSITE" id="PS00249">
    <property type="entry name" value="PDGF_1"/>
    <property type="match status" value="1"/>
</dbReference>
<dbReference type="PROSITE" id="PS50278">
    <property type="entry name" value="PDGF_2"/>
    <property type="match status" value="1"/>
</dbReference>
<comment type="function">
    <text evidence="2 3">Growth factor that plays an essential role in the regulation of embryonic development, cell proliferation, cell migration, survival and chemotaxis. Potent mitogen for cells of mesenchymal origin. Required for normal proliferation and recruitment of pericytes and vascular smooth muscle cells in the central nervous system, skin, lung, heart and placenta. Required for normal blood vessel development, and for normal development of kidney glomeruli. Plays an important role in wound healing. Signaling is modulated by the formation of heterodimers with PDGFA (By similarity).</text>
</comment>
<comment type="subunit">
    <text evidence="1 2">Antiparallel homodimer; disulfide-linked. Antiparallel heterodimer with PDGFA; disulfide-linked. The PDGFB homodimer interacts with PDGFRA and PDGFRB homodimers, and with heterodimers formed by PDGFRA and PDGFRB. The heterodimer composed of PDGFA and PDGFB interacts with PDGFRB homodimers, and with heterodimers formed by PDGFRA and PDGFRB. Interacts with XLKD1 (By similarity). Interacts with LRP1. Interacts with SORL1 (via the N-terminal ectodomain). Interacts with CD82; this interaction inhibits PDGFB-mediated signaling pathway (By similarity).</text>
</comment>
<comment type="subcellular location">
    <subcellularLocation>
        <location evidence="1">Secreted</location>
    </subcellularLocation>
    <text evidence="1">Released by platelets upon wounding.</text>
</comment>
<comment type="tissue specificity">
    <text>Expressed in a distinct subpopulation of smooth muscle cells in injured arteries.</text>
</comment>
<comment type="similarity">
    <text evidence="5">Belongs to the PDGF/VEGF growth factor family.</text>
</comment>
<protein>
    <recommendedName>
        <fullName>Platelet-derived growth factor subunit B</fullName>
        <shortName>PDGF subunit B</shortName>
    </recommendedName>
    <alternativeName>
        <fullName>PDGF-2</fullName>
    </alternativeName>
    <alternativeName>
        <fullName>Platelet-derived growth factor B chain</fullName>
    </alternativeName>
    <alternativeName>
        <fullName>Platelet-derived growth factor beta polypeptide</fullName>
    </alternativeName>
</protein>
<accession>Q05028</accession>
<keyword id="KW-0165">Cleavage on pair of basic residues</keyword>
<keyword id="KW-0217">Developmental protein</keyword>
<keyword id="KW-1015">Disulfide bond</keyword>
<keyword id="KW-0325">Glycoprotein</keyword>
<keyword id="KW-0339">Growth factor</keyword>
<keyword id="KW-0497">Mitogen</keyword>
<keyword id="KW-0656">Proto-oncogene</keyword>
<keyword id="KW-1185">Reference proteome</keyword>
<keyword id="KW-0964">Secreted</keyword>
<keyword id="KW-0732">Signal</keyword>
<feature type="signal peptide" evidence="1">
    <location>
        <begin position="1" status="less than"/>
        <end position="12"/>
    </location>
</feature>
<feature type="propeptide" id="PRO_0000023377" description="Removed in mature form" evidence="1">
    <location>
        <begin position="13"/>
        <end position="73"/>
    </location>
</feature>
<feature type="chain" id="PRO_0000023378" description="Platelet-derived growth factor subunit B">
    <location>
        <begin position="74"/>
        <end position="182"/>
    </location>
</feature>
<feature type="propeptide" id="PRO_0000023379" description="Removed in mature form" evidence="1">
    <location>
        <begin position="183"/>
        <end position="225"/>
    </location>
</feature>
<feature type="site" description="Involved in receptor binding">
    <location>
        <position position="100"/>
    </location>
</feature>
<feature type="site" description="Involved in receptor binding">
    <location>
        <position position="103"/>
    </location>
</feature>
<feature type="glycosylation site" description="N-linked (GlcNAc...) asparagine" evidence="4">
    <location>
        <position position="55"/>
    </location>
</feature>
<feature type="disulfide bond" evidence="1">
    <location>
        <begin position="89"/>
        <end position="133"/>
    </location>
</feature>
<feature type="disulfide bond" description="Interchain" evidence="1">
    <location>
        <position position="116"/>
    </location>
</feature>
<feature type="disulfide bond" evidence="1">
    <location>
        <begin position="122"/>
        <end position="170"/>
    </location>
</feature>
<feature type="disulfide bond" description="Interchain" evidence="1">
    <location>
        <position position="125"/>
    </location>
</feature>
<feature type="disulfide bond" evidence="1">
    <location>
        <begin position="126"/>
        <end position="172"/>
    </location>
</feature>
<feature type="non-terminal residue">
    <location>
        <position position="1"/>
    </location>
</feature>
<feature type="non-terminal residue">
    <location>
        <position position="225"/>
    </location>
</feature>
<organism>
    <name type="scientific">Rattus norvegicus</name>
    <name type="common">Rat</name>
    <dbReference type="NCBI Taxonomy" id="10116"/>
    <lineage>
        <taxon>Eukaryota</taxon>
        <taxon>Metazoa</taxon>
        <taxon>Chordata</taxon>
        <taxon>Craniata</taxon>
        <taxon>Vertebrata</taxon>
        <taxon>Euteleostomi</taxon>
        <taxon>Mammalia</taxon>
        <taxon>Eutheria</taxon>
        <taxon>Euarchontoglires</taxon>
        <taxon>Glires</taxon>
        <taxon>Rodentia</taxon>
        <taxon>Myomorpha</taxon>
        <taxon>Muroidea</taxon>
        <taxon>Muridae</taxon>
        <taxon>Murinae</taxon>
        <taxon>Rattus</taxon>
    </lineage>
</organism>